<keyword id="KW-0963">Cytoplasm</keyword>
<keyword id="KW-0342">GTP-binding</keyword>
<keyword id="KW-0396">Initiation factor</keyword>
<keyword id="KW-0547">Nucleotide-binding</keyword>
<keyword id="KW-0648">Protein biosynthesis</keyword>
<keyword id="KW-1185">Reference proteome</keyword>
<dbReference type="EMBL" id="CP000786">
    <property type="protein sequence ID" value="ABZ97632.1"/>
    <property type="molecule type" value="Genomic_DNA"/>
</dbReference>
<dbReference type="RefSeq" id="WP_012388511.1">
    <property type="nucleotide sequence ID" value="NC_010602.1"/>
</dbReference>
<dbReference type="SMR" id="B0SQH4"/>
<dbReference type="STRING" id="456481.LEPBI_I1525"/>
<dbReference type="KEGG" id="lbi:LEPBI_I1525"/>
<dbReference type="HOGENOM" id="CLU_006301_5_1_12"/>
<dbReference type="OrthoDB" id="9811804at2"/>
<dbReference type="BioCyc" id="LBIF456481:LEPBI_RS07505-MONOMER"/>
<dbReference type="Proteomes" id="UP000001847">
    <property type="component" value="Chromosome I"/>
</dbReference>
<dbReference type="GO" id="GO:0005829">
    <property type="term" value="C:cytosol"/>
    <property type="evidence" value="ECO:0007669"/>
    <property type="project" value="TreeGrafter"/>
</dbReference>
<dbReference type="GO" id="GO:0005525">
    <property type="term" value="F:GTP binding"/>
    <property type="evidence" value="ECO:0007669"/>
    <property type="project" value="UniProtKB-KW"/>
</dbReference>
<dbReference type="GO" id="GO:0003924">
    <property type="term" value="F:GTPase activity"/>
    <property type="evidence" value="ECO:0007669"/>
    <property type="project" value="UniProtKB-UniRule"/>
</dbReference>
<dbReference type="GO" id="GO:0003743">
    <property type="term" value="F:translation initiation factor activity"/>
    <property type="evidence" value="ECO:0007669"/>
    <property type="project" value="UniProtKB-UniRule"/>
</dbReference>
<dbReference type="CDD" id="cd01887">
    <property type="entry name" value="IF2_eIF5B"/>
    <property type="match status" value="1"/>
</dbReference>
<dbReference type="CDD" id="cd03702">
    <property type="entry name" value="IF2_mtIF2_II"/>
    <property type="match status" value="1"/>
</dbReference>
<dbReference type="CDD" id="cd03692">
    <property type="entry name" value="mtIF2_IVc"/>
    <property type="match status" value="1"/>
</dbReference>
<dbReference type="FunFam" id="2.40.30.10:FF:000008">
    <property type="entry name" value="Translation initiation factor IF-2"/>
    <property type="match status" value="1"/>
</dbReference>
<dbReference type="FunFam" id="2.40.30.10:FF:000054">
    <property type="entry name" value="Translation initiation factor IF-2"/>
    <property type="match status" value="1"/>
</dbReference>
<dbReference type="FunFam" id="3.40.50.10050:FF:000001">
    <property type="entry name" value="Translation initiation factor IF-2"/>
    <property type="match status" value="1"/>
</dbReference>
<dbReference type="FunFam" id="3.40.50.300:FF:000019">
    <property type="entry name" value="Translation initiation factor IF-2"/>
    <property type="match status" value="1"/>
</dbReference>
<dbReference type="Gene3D" id="3.40.50.300">
    <property type="entry name" value="P-loop containing nucleotide triphosphate hydrolases"/>
    <property type="match status" value="1"/>
</dbReference>
<dbReference type="Gene3D" id="2.40.30.10">
    <property type="entry name" value="Translation factors"/>
    <property type="match status" value="2"/>
</dbReference>
<dbReference type="Gene3D" id="3.40.50.10050">
    <property type="entry name" value="Translation initiation factor IF- 2, domain 3"/>
    <property type="match status" value="1"/>
</dbReference>
<dbReference type="HAMAP" id="MF_00100_B">
    <property type="entry name" value="IF_2_B"/>
    <property type="match status" value="1"/>
</dbReference>
<dbReference type="InterPro" id="IPR053905">
    <property type="entry name" value="EF-G-like_DII"/>
</dbReference>
<dbReference type="InterPro" id="IPR044145">
    <property type="entry name" value="IF2_II"/>
</dbReference>
<dbReference type="InterPro" id="IPR006847">
    <property type="entry name" value="IF2_N"/>
</dbReference>
<dbReference type="InterPro" id="IPR027417">
    <property type="entry name" value="P-loop_NTPase"/>
</dbReference>
<dbReference type="InterPro" id="IPR005225">
    <property type="entry name" value="Small_GTP-bd"/>
</dbReference>
<dbReference type="InterPro" id="IPR000795">
    <property type="entry name" value="T_Tr_GTP-bd_dom"/>
</dbReference>
<dbReference type="InterPro" id="IPR000178">
    <property type="entry name" value="TF_IF2_bacterial-like"/>
</dbReference>
<dbReference type="InterPro" id="IPR015760">
    <property type="entry name" value="TIF_IF2"/>
</dbReference>
<dbReference type="InterPro" id="IPR023115">
    <property type="entry name" value="TIF_IF2_dom3"/>
</dbReference>
<dbReference type="InterPro" id="IPR036925">
    <property type="entry name" value="TIF_IF2_dom3_sf"/>
</dbReference>
<dbReference type="InterPro" id="IPR009000">
    <property type="entry name" value="Transl_B-barrel_sf"/>
</dbReference>
<dbReference type="NCBIfam" id="TIGR00487">
    <property type="entry name" value="IF-2"/>
    <property type="match status" value="1"/>
</dbReference>
<dbReference type="NCBIfam" id="TIGR00231">
    <property type="entry name" value="small_GTP"/>
    <property type="match status" value="1"/>
</dbReference>
<dbReference type="PANTHER" id="PTHR43381:SF5">
    <property type="entry name" value="TR-TYPE G DOMAIN-CONTAINING PROTEIN"/>
    <property type="match status" value="1"/>
</dbReference>
<dbReference type="PANTHER" id="PTHR43381">
    <property type="entry name" value="TRANSLATION INITIATION FACTOR IF-2-RELATED"/>
    <property type="match status" value="1"/>
</dbReference>
<dbReference type="Pfam" id="PF22042">
    <property type="entry name" value="EF-G_D2"/>
    <property type="match status" value="1"/>
</dbReference>
<dbReference type="Pfam" id="PF00009">
    <property type="entry name" value="GTP_EFTU"/>
    <property type="match status" value="1"/>
</dbReference>
<dbReference type="Pfam" id="PF11987">
    <property type="entry name" value="IF-2"/>
    <property type="match status" value="1"/>
</dbReference>
<dbReference type="Pfam" id="PF04760">
    <property type="entry name" value="IF2_N"/>
    <property type="match status" value="1"/>
</dbReference>
<dbReference type="PRINTS" id="PR00449">
    <property type="entry name" value="RASTRNSFRMNG"/>
</dbReference>
<dbReference type="SUPFAM" id="SSF52156">
    <property type="entry name" value="Initiation factor IF2/eIF5b, domain 3"/>
    <property type="match status" value="1"/>
</dbReference>
<dbReference type="SUPFAM" id="SSF52540">
    <property type="entry name" value="P-loop containing nucleoside triphosphate hydrolases"/>
    <property type="match status" value="1"/>
</dbReference>
<dbReference type="SUPFAM" id="SSF50447">
    <property type="entry name" value="Translation proteins"/>
    <property type="match status" value="2"/>
</dbReference>
<dbReference type="PROSITE" id="PS51722">
    <property type="entry name" value="G_TR_2"/>
    <property type="match status" value="1"/>
</dbReference>
<dbReference type="PROSITE" id="PS01176">
    <property type="entry name" value="IF2"/>
    <property type="match status" value="1"/>
</dbReference>
<proteinExistence type="inferred from homology"/>
<gene>
    <name evidence="2" type="primary">infB</name>
    <name type="ordered locus">LEPBI_I1525</name>
</gene>
<organism>
    <name type="scientific">Leptospira biflexa serovar Patoc (strain Patoc 1 / ATCC 23582 / Paris)</name>
    <dbReference type="NCBI Taxonomy" id="456481"/>
    <lineage>
        <taxon>Bacteria</taxon>
        <taxon>Pseudomonadati</taxon>
        <taxon>Spirochaetota</taxon>
        <taxon>Spirochaetia</taxon>
        <taxon>Leptospirales</taxon>
        <taxon>Leptospiraceae</taxon>
        <taxon>Leptospira</taxon>
    </lineage>
</organism>
<sequence>MEEQKSIKETLQQGASGDKTKKKLVIKKKAAPSDEKKESSPGAQGQTTATEAKQSSPASSDKKKDLNELIREEAKRQGLGSGPQAPSQASPIVSRPDRKPEPLPQPDREKAPMDRKPESILSGDTSSPNFRSGGGQGGGNQGYFRKEDRNPIVSRPTTPRPPRPEGQTGGGYQGNRGPGQGGGYQGNRGPGQGGPGGYQGNRGPGQGGPGGYQGNRGPGQGGPGGYQGNRGPGQGGPGGYQGNRGPGQGGPGGYQGNRGARPIGQGGPGSGRPPGDAPFGAPGGLPGAGGPGGAKKRVFDKEKGGREENENTKFFKQSFRKQKAQAAALAAVPKEISILENIQVGEIAKKLNLKPGEVISKLMKMGMMVTINNVIDAETASILADDYGCKVKIVSLYDETVIEEEKDAPEDYITRPPVVTIMGHVDHGKTKLLDTIRSSRVAEGESGGITQHIGAYQVETERGKIAFLDTPGHEAFTSMRARGASVTDIVVLVVAADDGVMPQTIEAINHAKEAEVPIIVAVNKIDLPAANPEKVRQELSNYGLQPEEWGGTTIFCDISAKSNIGIDKLLEMLIIQAELLDHKANPKRKAKGTIVEAKLDPGRGAVATVLIQNGTLRVGDAFVAGVHAGRVRAMYDDLGRSIKEAGPSFPALVTGLDGVPDAGAPFDVVIDDKEARTISHSRQEYERLGQSKNAATRVTLDNMSEIIKQGALKELKVIIKADVRGSTEAVKEALEKLSTADVRLNVIHAGTGAIVDSDIILASASNAIVIGFHTRANPKTVSLAEKEKVEIKYYSIIYDVVNEVKASMEGMLEPEKVENIIGKVEIRDVFKISKVGNIAGCMVKSGKVTKQAHVRVISSETGEITWEGKIKNLKRMKDDVADVLTGFECGILLDGFNDFSVGDEIEAYEIREIARKL</sequence>
<accession>B0SQH4</accession>
<feature type="chain" id="PRO_1000093799" description="Translation initiation factor IF-2">
    <location>
        <begin position="1"/>
        <end position="917"/>
    </location>
</feature>
<feature type="domain" description="tr-type G">
    <location>
        <begin position="414"/>
        <end position="587"/>
    </location>
</feature>
<feature type="region of interest" description="Disordered" evidence="3">
    <location>
        <begin position="1"/>
        <end position="312"/>
    </location>
</feature>
<feature type="region of interest" description="G1" evidence="1">
    <location>
        <begin position="423"/>
        <end position="430"/>
    </location>
</feature>
<feature type="region of interest" description="G2" evidence="1">
    <location>
        <begin position="448"/>
        <end position="452"/>
    </location>
</feature>
<feature type="region of interest" description="G3" evidence="1">
    <location>
        <begin position="469"/>
        <end position="472"/>
    </location>
</feature>
<feature type="region of interest" description="G4" evidence="1">
    <location>
        <begin position="523"/>
        <end position="526"/>
    </location>
</feature>
<feature type="region of interest" description="G5" evidence="1">
    <location>
        <begin position="559"/>
        <end position="561"/>
    </location>
</feature>
<feature type="compositionally biased region" description="Basic residues" evidence="3">
    <location>
        <begin position="20"/>
        <end position="30"/>
    </location>
</feature>
<feature type="compositionally biased region" description="Polar residues" evidence="3">
    <location>
        <begin position="41"/>
        <end position="59"/>
    </location>
</feature>
<feature type="compositionally biased region" description="Basic and acidic residues" evidence="3">
    <location>
        <begin position="60"/>
        <end position="76"/>
    </location>
</feature>
<feature type="compositionally biased region" description="Basic and acidic residues" evidence="3">
    <location>
        <begin position="95"/>
        <end position="118"/>
    </location>
</feature>
<feature type="compositionally biased region" description="Gly residues" evidence="3">
    <location>
        <begin position="132"/>
        <end position="141"/>
    </location>
</feature>
<feature type="compositionally biased region" description="Gly residues" evidence="3">
    <location>
        <begin position="167"/>
        <end position="256"/>
    </location>
</feature>
<feature type="compositionally biased region" description="Gly residues" evidence="3">
    <location>
        <begin position="281"/>
        <end position="293"/>
    </location>
</feature>
<feature type="compositionally biased region" description="Basic and acidic residues" evidence="3">
    <location>
        <begin position="297"/>
        <end position="312"/>
    </location>
</feature>
<feature type="binding site" evidence="2">
    <location>
        <begin position="423"/>
        <end position="430"/>
    </location>
    <ligand>
        <name>GTP</name>
        <dbReference type="ChEBI" id="CHEBI:37565"/>
    </ligand>
</feature>
<feature type="binding site" evidence="2">
    <location>
        <begin position="469"/>
        <end position="473"/>
    </location>
    <ligand>
        <name>GTP</name>
        <dbReference type="ChEBI" id="CHEBI:37565"/>
    </ligand>
</feature>
<feature type="binding site" evidence="2">
    <location>
        <begin position="523"/>
        <end position="526"/>
    </location>
    <ligand>
        <name>GTP</name>
        <dbReference type="ChEBI" id="CHEBI:37565"/>
    </ligand>
</feature>
<name>IF2_LEPBP</name>
<evidence type="ECO:0000250" key="1"/>
<evidence type="ECO:0000255" key="2">
    <source>
        <dbReference type="HAMAP-Rule" id="MF_00100"/>
    </source>
</evidence>
<evidence type="ECO:0000256" key="3">
    <source>
        <dbReference type="SAM" id="MobiDB-lite"/>
    </source>
</evidence>
<protein>
    <recommendedName>
        <fullName evidence="2">Translation initiation factor IF-2</fullName>
    </recommendedName>
</protein>
<reference key="1">
    <citation type="journal article" date="2008" name="PLoS ONE">
        <title>Genome sequence of the saprophyte Leptospira biflexa provides insights into the evolution of Leptospira and the pathogenesis of leptospirosis.</title>
        <authorList>
            <person name="Picardeau M."/>
            <person name="Bulach D.M."/>
            <person name="Bouchier C."/>
            <person name="Zuerner R.L."/>
            <person name="Zidane N."/>
            <person name="Wilson P.J."/>
            <person name="Creno S."/>
            <person name="Kuczek E.S."/>
            <person name="Bommezzadri S."/>
            <person name="Davis J.C."/>
            <person name="McGrath A."/>
            <person name="Johnson M.J."/>
            <person name="Boursaux-Eude C."/>
            <person name="Seemann T."/>
            <person name="Rouy Z."/>
            <person name="Coppel R.L."/>
            <person name="Rood J.I."/>
            <person name="Lajus A."/>
            <person name="Davies J.K."/>
            <person name="Medigue C."/>
            <person name="Adler B."/>
        </authorList>
    </citation>
    <scope>NUCLEOTIDE SEQUENCE [LARGE SCALE GENOMIC DNA]</scope>
    <source>
        <strain>Patoc 1 / ATCC 23582 / Paris</strain>
    </source>
</reference>
<comment type="function">
    <text evidence="2">One of the essential components for the initiation of protein synthesis. Protects formylmethionyl-tRNA from spontaneous hydrolysis and promotes its binding to the 30S ribosomal subunits. Also involved in the hydrolysis of GTP during the formation of the 70S ribosomal complex.</text>
</comment>
<comment type="subcellular location">
    <subcellularLocation>
        <location evidence="2">Cytoplasm</location>
    </subcellularLocation>
</comment>
<comment type="similarity">
    <text evidence="2">Belongs to the TRAFAC class translation factor GTPase superfamily. Classic translation factor GTPase family. IF-2 subfamily.</text>
</comment>